<sequence length="121" mass="13115">MYIYWILLGLAIATEITGTLSMKWASVSEGNGGFILMLVMISLSYIFLSFAVKKIALGVAYALWEGIGILFITLFSVLLFDESLSLMKIAGLTTLVAGIVLIKSGTRKARKPELEVNHGAV</sequence>
<protein>
    <recommendedName>
        <fullName evidence="1">Spermidine export protein MdtJ</fullName>
    </recommendedName>
</protein>
<keyword id="KW-0997">Cell inner membrane</keyword>
<keyword id="KW-1003">Cell membrane</keyword>
<keyword id="KW-0472">Membrane</keyword>
<keyword id="KW-0812">Transmembrane</keyword>
<keyword id="KW-1133">Transmembrane helix</keyword>
<keyword id="KW-0813">Transport</keyword>
<dbReference type="EMBL" id="CU928160">
    <property type="protein sequence ID" value="CAQ98507.1"/>
    <property type="molecule type" value="Genomic_DNA"/>
</dbReference>
<dbReference type="RefSeq" id="WP_000276149.1">
    <property type="nucleotide sequence ID" value="NC_011741.1"/>
</dbReference>
<dbReference type="SMR" id="B7LZZ2"/>
<dbReference type="GeneID" id="93775748"/>
<dbReference type="KEGG" id="ecr:ECIAI1_1650"/>
<dbReference type="HOGENOM" id="CLU_133067_0_0_6"/>
<dbReference type="GO" id="GO:0005886">
    <property type="term" value="C:plasma membrane"/>
    <property type="evidence" value="ECO:0007669"/>
    <property type="project" value="UniProtKB-SubCell"/>
</dbReference>
<dbReference type="GO" id="GO:0015199">
    <property type="term" value="F:amino-acid betaine transmembrane transporter activity"/>
    <property type="evidence" value="ECO:0007669"/>
    <property type="project" value="TreeGrafter"/>
</dbReference>
<dbReference type="GO" id="GO:0015297">
    <property type="term" value="F:antiporter activity"/>
    <property type="evidence" value="ECO:0007669"/>
    <property type="project" value="TreeGrafter"/>
</dbReference>
<dbReference type="GO" id="GO:0015220">
    <property type="term" value="F:choline transmembrane transporter activity"/>
    <property type="evidence" value="ECO:0007669"/>
    <property type="project" value="TreeGrafter"/>
</dbReference>
<dbReference type="GO" id="GO:0015606">
    <property type="term" value="F:spermidine transmembrane transporter activity"/>
    <property type="evidence" value="ECO:0007669"/>
    <property type="project" value="UniProtKB-UniRule"/>
</dbReference>
<dbReference type="GO" id="GO:0031460">
    <property type="term" value="P:glycine betaine transport"/>
    <property type="evidence" value="ECO:0007669"/>
    <property type="project" value="TreeGrafter"/>
</dbReference>
<dbReference type="FunFam" id="1.10.3730.20:FF:000001">
    <property type="entry name" value="Quaternary ammonium compound resistance transporter SugE"/>
    <property type="match status" value="1"/>
</dbReference>
<dbReference type="Gene3D" id="1.10.3730.20">
    <property type="match status" value="1"/>
</dbReference>
<dbReference type="HAMAP" id="MF_01598">
    <property type="entry name" value="MdtJ"/>
    <property type="match status" value="1"/>
</dbReference>
<dbReference type="InterPro" id="IPR000390">
    <property type="entry name" value="Small_drug/metabolite_transptr"/>
</dbReference>
<dbReference type="InterPro" id="IPR045324">
    <property type="entry name" value="Small_multidrug_res"/>
</dbReference>
<dbReference type="InterPro" id="IPR023740">
    <property type="entry name" value="Spermidine_export_MdtJ"/>
</dbReference>
<dbReference type="NCBIfam" id="NF007767">
    <property type="entry name" value="PRK10452.1"/>
    <property type="match status" value="1"/>
</dbReference>
<dbReference type="PANTHER" id="PTHR30561">
    <property type="entry name" value="SMR FAMILY PROTON-DEPENDENT DRUG EFFLUX TRANSPORTER SUGE"/>
    <property type="match status" value="1"/>
</dbReference>
<dbReference type="PANTHER" id="PTHR30561:SF2">
    <property type="entry name" value="SPERMIDINE EXPORT PROTEIN MDTJ"/>
    <property type="match status" value="1"/>
</dbReference>
<dbReference type="Pfam" id="PF00893">
    <property type="entry name" value="Multi_Drug_Res"/>
    <property type="match status" value="1"/>
</dbReference>
<dbReference type="SUPFAM" id="SSF103481">
    <property type="entry name" value="Multidrug resistance efflux transporter EmrE"/>
    <property type="match status" value="1"/>
</dbReference>
<proteinExistence type="inferred from homology"/>
<name>MDTJ_ECO8A</name>
<evidence type="ECO:0000255" key="1">
    <source>
        <dbReference type="HAMAP-Rule" id="MF_01598"/>
    </source>
</evidence>
<gene>
    <name evidence="1" type="primary">mdtJ</name>
    <name type="ordered locus">ECIAI1_1650</name>
</gene>
<reference key="1">
    <citation type="journal article" date="2009" name="PLoS Genet.">
        <title>Organised genome dynamics in the Escherichia coli species results in highly diverse adaptive paths.</title>
        <authorList>
            <person name="Touchon M."/>
            <person name="Hoede C."/>
            <person name="Tenaillon O."/>
            <person name="Barbe V."/>
            <person name="Baeriswyl S."/>
            <person name="Bidet P."/>
            <person name="Bingen E."/>
            <person name="Bonacorsi S."/>
            <person name="Bouchier C."/>
            <person name="Bouvet O."/>
            <person name="Calteau A."/>
            <person name="Chiapello H."/>
            <person name="Clermont O."/>
            <person name="Cruveiller S."/>
            <person name="Danchin A."/>
            <person name="Diard M."/>
            <person name="Dossat C."/>
            <person name="Karoui M.E."/>
            <person name="Frapy E."/>
            <person name="Garry L."/>
            <person name="Ghigo J.M."/>
            <person name="Gilles A.M."/>
            <person name="Johnson J."/>
            <person name="Le Bouguenec C."/>
            <person name="Lescat M."/>
            <person name="Mangenot S."/>
            <person name="Martinez-Jehanne V."/>
            <person name="Matic I."/>
            <person name="Nassif X."/>
            <person name="Oztas S."/>
            <person name="Petit M.A."/>
            <person name="Pichon C."/>
            <person name="Rouy Z."/>
            <person name="Ruf C.S."/>
            <person name="Schneider D."/>
            <person name="Tourret J."/>
            <person name="Vacherie B."/>
            <person name="Vallenet D."/>
            <person name="Medigue C."/>
            <person name="Rocha E.P.C."/>
            <person name="Denamur E."/>
        </authorList>
    </citation>
    <scope>NUCLEOTIDE SEQUENCE [LARGE SCALE GENOMIC DNA]</scope>
    <source>
        <strain>IAI1</strain>
    </source>
</reference>
<organism>
    <name type="scientific">Escherichia coli O8 (strain IAI1)</name>
    <dbReference type="NCBI Taxonomy" id="585034"/>
    <lineage>
        <taxon>Bacteria</taxon>
        <taxon>Pseudomonadati</taxon>
        <taxon>Pseudomonadota</taxon>
        <taxon>Gammaproteobacteria</taxon>
        <taxon>Enterobacterales</taxon>
        <taxon>Enterobacteriaceae</taxon>
        <taxon>Escherichia</taxon>
    </lineage>
</organism>
<accession>B7LZZ2</accession>
<comment type="function">
    <text evidence="1">Catalyzes the excretion of spermidine.</text>
</comment>
<comment type="subunit">
    <text evidence="1">Forms a complex with MdtI.</text>
</comment>
<comment type="subcellular location">
    <subcellularLocation>
        <location evidence="1">Cell inner membrane</location>
        <topology evidence="1">Multi-pass membrane protein</topology>
    </subcellularLocation>
</comment>
<comment type="similarity">
    <text evidence="1">Belongs to the drug/metabolite transporter (DMT) superfamily. Small multidrug resistance (SMR) (TC 2.A.7.1) family. MdtJ subfamily.</text>
</comment>
<feature type="chain" id="PRO_1000148014" description="Spermidine export protein MdtJ">
    <location>
        <begin position="1"/>
        <end position="121"/>
    </location>
</feature>
<feature type="transmembrane region" description="Helical" evidence="1">
    <location>
        <begin position="1"/>
        <end position="21"/>
    </location>
</feature>
<feature type="transmembrane region" description="Helical" evidence="1">
    <location>
        <begin position="32"/>
        <end position="52"/>
    </location>
</feature>
<feature type="transmembrane region" description="Helical" evidence="1">
    <location>
        <begin position="55"/>
        <end position="75"/>
    </location>
</feature>
<feature type="transmembrane region" description="Helical" evidence="1">
    <location>
        <begin position="82"/>
        <end position="102"/>
    </location>
</feature>